<keyword id="KW-0963">Cytoplasm</keyword>
<keyword id="KW-0251">Elongation factor</keyword>
<keyword id="KW-0648">Protein biosynthesis</keyword>
<keyword id="KW-1185">Reference proteome</keyword>
<evidence type="ECO:0000255" key="1">
    <source>
        <dbReference type="HAMAP-Rule" id="MF_00050"/>
    </source>
</evidence>
<reference key="1">
    <citation type="submission" date="2009-01" db="EMBL/GenBank/DDBJ databases">
        <title>Complete sequence of Geobacter sp. FRC-32.</title>
        <authorList>
            <consortium name="US DOE Joint Genome Institute"/>
            <person name="Lucas S."/>
            <person name="Copeland A."/>
            <person name="Lapidus A."/>
            <person name="Glavina del Rio T."/>
            <person name="Dalin E."/>
            <person name="Tice H."/>
            <person name="Bruce D."/>
            <person name="Goodwin L."/>
            <person name="Pitluck S."/>
            <person name="Saunders E."/>
            <person name="Brettin T."/>
            <person name="Detter J.C."/>
            <person name="Han C."/>
            <person name="Larimer F."/>
            <person name="Land M."/>
            <person name="Hauser L."/>
            <person name="Kyrpides N."/>
            <person name="Ovchinnikova G."/>
            <person name="Kostka J."/>
            <person name="Richardson P."/>
        </authorList>
    </citation>
    <scope>NUCLEOTIDE SEQUENCE [LARGE SCALE GENOMIC DNA]</scope>
    <source>
        <strain>DSM 22248 / JCM 15807 / FRC-32</strain>
    </source>
</reference>
<name>EFTS_GEODF</name>
<protein>
    <recommendedName>
        <fullName evidence="1">Elongation factor Ts</fullName>
        <shortName evidence="1">EF-Ts</shortName>
    </recommendedName>
</protein>
<gene>
    <name evidence="1" type="primary">tsf</name>
    <name type="ordered locus">Geob_1521</name>
</gene>
<comment type="function">
    <text evidence="1">Associates with the EF-Tu.GDP complex and induces the exchange of GDP to GTP. It remains bound to the aminoacyl-tRNA.EF-Tu.GTP complex up to the GTP hydrolysis stage on the ribosome.</text>
</comment>
<comment type="subcellular location">
    <subcellularLocation>
        <location evidence="1">Cytoplasm</location>
    </subcellularLocation>
</comment>
<comment type="similarity">
    <text evidence="1">Belongs to the EF-Ts family.</text>
</comment>
<accession>B9M5C5</accession>
<sequence length="216" mass="23372">MSITATQVNELRKATGAGLMDCKKALTETGGDHEQAVDYLRKKGLAAASKKAGRAATEGLVGSYIHAGGKIGVLVEVNCETDFVAKNEGFQNFVKDVAMHIAAASPLYVRREEVDPSVLEREKEIYRAKAKESGKPDNIVEKIIEGQVNKFYGDICLLEQAFVKDPDKTVQTYLNETIATIGENISIRRFAKFNLGEGLEKKESDFAAEVAAAAGA</sequence>
<organism>
    <name type="scientific">Geotalea daltonii (strain DSM 22248 / JCM 15807 / FRC-32)</name>
    <name type="common">Geobacter daltonii</name>
    <dbReference type="NCBI Taxonomy" id="316067"/>
    <lineage>
        <taxon>Bacteria</taxon>
        <taxon>Pseudomonadati</taxon>
        <taxon>Thermodesulfobacteriota</taxon>
        <taxon>Desulfuromonadia</taxon>
        <taxon>Geobacterales</taxon>
        <taxon>Geobacteraceae</taxon>
        <taxon>Geotalea</taxon>
    </lineage>
</organism>
<dbReference type="EMBL" id="CP001390">
    <property type="protein sequence ID" value="ACM19880.1"/>
    <property type="molecule type" value="Genomic_DNA"/>
</dbReference>
<dbReference type="RefSeq" id="WP_012646609.1">
    <property type="nucleotide sequence ID" value="NC_011979.1"/>
</dbReference>
<dbReference type="SMR" id="B9M5C5"/>
<dbReference type="STRING" id="316067.Geob_1521"/>
<dbReference type="KEGG" id="geo:Geob_1521"/>
<dbReference type="eggNOG" id="COG0264">
    <property type="taxonomic scope" value="Bacteria"/>
</dbReference>
<dbReference type="HOGENOM" id="CLU_047155_1_1_7"/>
<dbReference type="OrthoDB" id="9808348at2"/>
<dbReference type="Proteomes" id="UP000007721">
    <property type="component" value="Chromosome"/>
</dbReference>
<dbReference type="GO" id="GO:0005737">
    <property type="term" value="C:cytoplasm"/>
    <property type="evidence" value="ECO:0007669"/>
    <property type="project" value="UniProtKB-SubCell"/>
</dbReference>
<dbReference type="GO" id="GO:0003746">
    <property type="term" value="F:translation elongation factor activity"/>
    <property type="evidence" value="ECO:0007669"/>
    <property type="project" value="UniProtKB-UniRule"/>
</dbReference>
<dbReference type="CDD" id="cd14275">
    <property type="entry name" value="UBA_EF-Ts"/>
    <property type="match status" value="1"/>
</dbReference>
<dbReference type="FunFam" id="1.10.286.20:FF:000001">
    <property type="entry name" value="Elongation factor Ts"/>
    <property type="match status" value="1"/>
</dbReference>
<dbReference type="FunFam" id="1.10.8.10:FF:000001">
    <property type="entry name" value="Elongation factor Ts"/>
    <property type="match status" value="1"/>
</dbReference>
<dbReference type="Gene3D" id="1.10.286.20">
    <property type="match status" value="1"/>
</dbReference>
<dbReference type="Gene3D" id="1.10.8.10">
    <property type="entry name" value="DNA helicase RuvA subunit, C-terminal domain"/>
    <property type="match status" value="1"/>
</dbReference>
<dbReference type="Gene3D" id="3.30.479.20">
    <property type="entry name" value="Elongation factor Ts, dimerisation domain"/>
    <property type="match status" value="1"/>
</dbReference>
<dbReference type="HAMAP" id="MF_00050">
    <property type="entry name" value="EF_Ts"/>
    <property type="match status" value="1"/>
</dbReference>
<dbReference type="InterPro" id="IPR036402">
    <property type="entry name" value="EF-Ts_dimer_sf"/>
</dbReference>
<dbReference type="InterPro" id="IPR001816">
    <property type="entry name" value="Transl_elong_EFTs/EF1B"/>
</dbReference>
<dbReference type="InterPro" id="IPR014039">
    <property type="entry name" value="Transl_elong_EFTs/EF1B_dimer"/>
</dbReference>
<dbReference type="InterPro" id="IPR018101">
    <property type="entry name" value="Transl_elong_Ts_CS"/>
</dbReference>
<dbReference type="InterPro" id="IPR009060">
    <property type="entry name" value="UBA-like_sf"/>
</dbReference>
<dbReference type="NCBIfam" id="TIGR00116">
    <property type="entry name" value="tsf"/>
    <property type="match status" value="2"/>
</dbReference>
<dbReference type="PANTHER" id="PTHR11741">
    <property type="entry name" value="ELONGATION FACTOR TS"/>
    <property type="match status" value="1"/>
</dbReference>
<dbReference type="PANTHER" id="PTHR11741:SF0">
    <property type="entry name" value="ELONGATION FACTOR TS, MITOCHONDRIAL"/>
    <property type="match status" value="1"/>
</dbReference>
<dbReference type="Pfam" id="PF00889">
    <property type="entry name" value="EF_TS"/>
    <property type="match status" value="1"/>
</dbReference>
<dbReference type="SUPFAM" id="SSF54713">
    <property type="entry name" value="Elongation factor Ts (EF-Ts), dimerisation domain"/>
    <property type="match status" value="1"/>
</dbReference>
<dbReference type="SUPFAM" id="SSF46934">
    <property type="entry name" value="UBA-like"/>
    <property type="match status" value="1"/>
</dbReference>
<dbReference type="PROSITE" id="PS01126">
    <property type="entry name" value="EF_TS_1"/>
    <property type="match status" value="1"/>
</dbReference>
<dbReference type="PROSITE" id="PS01127">
    <property type="entry name" value="EF_TS_2"/>
    <property type="match status" value="1"/>
</dbReference>
<proteinExistence type="inferred from homology"/>
<feature type="chain" id="PRO_1000117581" description="Elongation factor Ts">
    <location>
        <begin position="1"/>
        <end position="216"/>
    </location>
</feature>
<feature type="region of interest" description="Involved in Mg(2+) ion dislocation from EF-Tu" evidence="1">
    <location>
        <begin position="81"/>
        <end position="84"/>
    </location>
</feature>